<name>FPP1_ARATH</name>
<accession>Q9CAP9</accession>
<accession>Q84WP8</accession>
<dbReference type="EMBL" id="AC010704">
    <property type="protein sequence ID" value="AAG51666.1"/>
    <property type="molecule type" value="Genomic_DNA"/>
</dbReference>
<dbReference type="EMBL" id="CP002684">
    <property type="protein sequence ID" value="AEE35994.1"/>
    <property type="molecule type" value="Genomic_DNA"/>
</dbReference>
<dbReference type="EMBL" id="CP002684">
    <property type="protein sequence ID" value="AEE35995.1"/>
    <property type="molecule type" value="Genomic_DNA"/>
</dbReference>
<dbReference type="EMBL" id="CP002684">
    <property type="protein sequence ID" value="ANM60713.1"/>
    <property type="molecule type" value="Genomic_DNA"/>
</dbReference>
<dbReference type="EMBL" id="BT002921">
    <property type="protein sequence ID" value="AAO22737.1"/>
    <property type="molecule type" value="mRNA"/>
</dbReference>
<dbReference type="EMBL" id="BX815854">
    <property type="status" value="NOT_ANNOTATED_CDS"/>
    <property type="molecule type" value="mRNA"/>
</dbReference>
<dbReference type="PIR" id="C96805">
    <property type="entry name" value="C96805"/>
</dbReference>
<dbReference type="RefSeq" id="NP_001322979.1">
    <molecule id="Q9CAP9-1"/>
    <property type="nucleotide sequence ID" value="NM_001334786.1"/>
</dbReference>
<dbReference type="RefSeq" id="NP_177881.2">
    <molecule id="Q9CAP9-2"/>
    <property type="nucleotide sequence ID" value="NM_106406.2"/>
</dbReference>
<dbReference type="RefSeq" id="NP_974162.1">
    <molecule id="Q9CAP9-1"/>
    <property type="nucleotide sequence ID" value="NM_202433.2"/>
</dbReference>
<dbReference type="SMR" id="Q9CAP9"/>
<dbReference type="BioGRID" id="29312">
    <property type="interactions" value="1"/>
</dbReference>
<dbReference type="FunCoup" id="Q9CAP9">
    <property type="interactions" value="285"/>
</dbReference>
<dbReference type="STRING" id="3702.Q9CAP9"/>
<dbReference type="iPTMnet" id="Q9CAP9"/>
<dbReference type="PaxDb" id="3702-AT1G77580.2"/>
<dbReference type="ProteomicsDB" id="230111">
    <molecule id="Q9CAP9-1"/>
</dbReference>
<dbReference type="EnsemblPlants" id="AT1G77580.1">
    <molecule id="Q9CAP9-2"/>
    <property type="protein sequence ID" value="AT1G77580.1"/>
    <property type="gene ID" value="AT1G77580"/>
</dbReference>
<dbReference type="EnsemblPlants" id="AT1G77580.2">
    <molecule id="Q9CAP9-1"/>
    <property type="protein sequence ID" value="AT1G77580.2"/>
    <property type="gene ID" value="AT1G77580"/>
</dbReference>
<dbReference type="EnsemblPlants" id="AT1G77580.3">
    <molecule id="Q9CAP9-1"/>
    <property type="protein sequence ID" value="AT1G77580.3"/>
    <property type="gene ID" value="AT1G77580"/>
</dbReference>
<dbReference type="GeneID" id="844093"/>
<dbReference type="Gramene" id="AT1G77580.1">
    <molecule id="Q9CAP9-2"/>
    <property type="protein sequence ID" value="AT1G77580.1"/>
    <property type="gene ID" value="AT1G77580"/>
</dbReference>
<dbReference type="Gramene" id="AT1G77580.2">
    <molecule id="Q9CAP9-1"/>
    <property type="protein sequence ID" value="AT1G77580.2"/>
    <property type="gene ID" value="AT1G77580"/>
</dbReference>
<dbReference type="Gramene" id="AT1G77580.3">
    <molecule id="Q9CAP9-1"/>
    <property type="protein sequence ID" value="AT1G77580.3"/>
    <property type="gene ID" value="AT1G77580"/>
</dbReference>
<dbReference type="KEGG" id="ath:AT1G77580"/>
<dbReference type="Araport" id="AT1G77580"/>
<dbReference type="TAIR" id="AT1G77580">
    <property type="gene designation" value="VETH3"/>
</dbReference>
<dbReference type="eggNOG" id="ENOG502QQJ4">
    <property type="taxonomic scope" value="Eukaryota"/>
</dbReference>
<dbReference type="HOGENOM" id="CLU_012828_1_0_1"/>
<dbReference type="InParanoid" id="Q9CAP9"/>
<dbReference type="OMA" id="FKNEKAM"/>
<dbReference type="OrthoDB" id="128924at2759"/>
<dbReference type="PhylomeDB" id="Q9CAP9"/>
<dbReference type="PRO" id="PR:Q9CAP9"/>
<dbReference type="Proteomes" id="UP000006548">
    <property type="component" value="Chromosome 1"/>
</dbReference>
<dbReference type="ExpressionAtlas" id="Q9CAP9">
    <property type="expression patterns" value="baseline and differential"/>
</dbReference>
<dbReference type="Gene3D" id="1.10.287.1490">
    <property type="match status" value="1"/>
</dbReference>
<dbReference type="InterPro" id="IPR008587">
    <property type="entry name" value="FPP_plant"/>
</dbReference>
<dbReference type="PANTHER" id="PTHR31580:SF5">
    <property type="entry name" value="FILAMENT-LIKE PLANT PROTEIN 1-RELATED"/>
    <property type="match status" value="1"/>
</dbReference>
<dbReference type="PANTHER" id="PTHR31580">
    <property type="entry name" value="FILAMENT-LIKE PLANT PROTEIN 4"/>
    <property type="match status" value="1"/>
</dbReference>
<dbReference type="Pfam" id="PF05911">
    <property type="entry name" value="FPP"/>
    <property type="match status" value="3"/>
</dbReference>
<comment type="subunit">
    <text evidence="1">Interacts with WPP/MAF proteins.</text>
</comment>
<comment type="alternative products">
    <event type="alternative splicing"/>
    <isoform>
        <id>Q9CAP9-1</id>
        <name>1</name>
        <sequence type="displayed"/>
    </isoform>
    <isoform>
        <id>Q9CAP9-2</id>
        <name>2</name>
        <sequence type="described" ref="VSP_035072 VSP_035073 VSP_035074"/>
    </isoform>
</comment>
<comment type="similarity">
    <text evidence="5">Belongs to the FPP family.</text>
</comment>
<comment type="sequence caution" evidence="5">
    <conflict type="frameshift">
        <sequence resource="EMBL" id="BX815854"/>
    </conflict>
</comment>
<feature type="chain" id="PRO_0000347199" description="Filament-like plant protein 1">
    <location>
        <begin position="1"/>
        <end position="779"/>
    </location>
</feature>
<feature type="region of interest" description="Disordered" evidence="3">
    <location>
        <begin position="1"/>
        <end position="55"/>
    </location>
</feature>
<feature type="region of interest" description="Disordered" evidence="3">
    <location>
        <begin position="253"/>
        <end position="274"/>
    </location>
</feature>
<feature type="region of interest" description="Disordered" evidence="3">
    <location>
        <begin position="315"/>
        <end position="336"/>
    </location>
</feature>
<feature type="region of interest" description="Disordered" evidence="3">
    <location>
        <begin position="718"/>
        <end position="764"/>
    </location>
</feature>
<feature type="coiled-coil region" evidence="2">
    <location>
        <begin position="47"/>
        <end position="200"/>
    </location>
</feature>
<feature type="coiled-coil region" evidence="2">
    <location>
        <begin position="337"/>
        <end position="674"/>
    </location>
</feature>
<feature type="compositionally biased region" description="Basic and acidic residues" evidence="3">
    <location>
        <begin position="1"/>
        <end position="14"/>
    </location>
</feature>
<feature type="compositionally biased region" description="Basic and acidic residues" evidence="3">
    <location>
        <begin position="256"/>
        <end position="272"/>
    </location>
</feature>
<feature type="compositionally biased region" description="Low complexity" evidence="3">
    <location>
        <begin position="324"/>
        <end position="336"/>
    </location>
</feature>
<feature type="compositionally biased region" description="Basic and acidic residues" evidence="3">
    <location>
        <begin position="718"/>
        <end position="731"/>
    </location>
</feature>
<feature type="compositionally biased region" description="Low complexity" evidence="3">
    <location>
        <begin position="733"/>
        <end position="752"/>
    </location>
</feature>
<feature type="splice variant" id="VSP_035072" description="In isoform 2." evidence="4">
    <location>
        <begin position="1"/>
        <end position="34"/>
    </location>
</feature>
<feature type="splice variant" id="VSP_035073" description="In isoform 2." evidence="4">
    <original>EDIETAAGK</original>
    <variation>VCLQSSGVS</variation>
    <location>
        <begin position="655"/>
        <end position="663"/>
    </location>
</feature>
<feature type="splice variant" id="VSP_035074" description="In isoform 2." evidence="4">
    <location>
        <begin position="664"/>
        <end position="779"/>
    </location>
</feature>
<organism>
    <name type="scientific">Arabidopsis thaliana</name>
    <name type="common">Mouse-ear cress</name>
    <dbReference type="NCBI Taxonomy" id="3702"/>
    <lineage>
        <taxon>Eukaryota</taxon>
        <taxon>Viridiplantae</taxon>
        <taxon>Streptophyta</taxon>
        <taxon>Embryophyta</taxon>
        <taxon>Tracheophyta</taxon>
        <taxon>Spermatophyta</taxon>
        <taxon>Magnoliopsida</taxon>
        <taxon>eudicotyledons</taxon>
        <taxon>Gunneridae</taxon>
        <taxon>Pentapetalae</taxon>
        <taxon>rosids</taxon>
        <taxon>malvids</taxon>
        <taxon>Brassicales</taxon>
        <taxon>Brassicaceae</taxon>
        <taxon>Camelineae</taxon>
        <taxon>Arabidopsis</taxon>
    </lineage>
</organism>
<gene>
    <name type="primary">FPP1</name>
    <name type="ordered locus">At1g77580</name>
    <name type="ORF">T5M16.17</name>
</gene>
<protein>
    <recommendedName>
        <fullName>Filament-like plant protein 1</fullName>
        <shortName>AtFPP1</shortName>
    </recommendedName>
</protein>
<evidence type="ECO:0000250" key="1"/>
<evidence type="ECO:0000255" key="2"/>
<evidence type="ECO:0000256" key="3">
    <source>
        <dbReference type="SAM" id="MobiDB-lite"/>
    </source>
</evidence>
<evidence type="ECO:0000303" key="4">
    <source>
    </source>
</evidence>
<evidence type="ECO:0000305" key="5"/>
<proteinExistence type="evidence at transcript level"/>
<reference key="1">
    <citation type="journal article" date="2000" name="Nature">
        <title>Sequence and analysis of chromosome 1 of the plant Arabidopsis thaliana.</title>
        <authorList>
            <person name="Theologis A."/>
            <person name="Ecker J.R."/>
            <person name="Palm C.J."/>
            <person name="Federspiel N.A."/>
            <person name="Kaul S."/>
            <person name="White O."/>
            <person name="Alonso J."/>
            <person name="Altafi H."/>
            <person name="Araujo R."/>
            <person name="Bowman C.L."/>
            <person name="Brooks S.Y."/>
            <person name="Buehler E."/>
            <person name="Chan A."/>
            <person name="Chao Q."/>
            <person name="Chen H."/>
            <person name="Cheuk R.F."/>
            <person name="Chin C.W."/>
            <person name="Chung M.K."/>
            <person name="Conn L."/>
            <person name="Conway A.B."/>
            <person name="Conway A.R."/>
            <person name="Creasy T.H."/>
            <person name="Dewar K."/>
            <person name="Dunn P."/>
            <person name="Etgu P."/>
            <person name="Feldblyum T.V."/>
            <person name="Feng J.-D."/>
            <person name="Fong B."/>
            <person name="Fujii C.Y."/>
            <person name="Gill J.E."/>
            <person name="Goldsmith A.D."/>
            <person name="Haas B."/>
            <person name="Hansen N.F."/>
            <person name="Hughes B."/>
            <person name="Huizar L."/>
            <person name="Hunter J.L."/>
            <person name="Jenkins J."/>
            <person name="Johnson-Hopson C."/>
            <person name="Khan S."/>
            <person name="Khaykin E."/>
            <person name="Kim C.J."/>
            <person name="Koo H.L."/>
            <person name="Kremenetskaia I."/>
            <person name="Kurtz D.B."/>
            <person name="Kwan A."/>
            <person name="Lam B."/>
            <person name="Langin-Hooper S."/>
            <person name="Lee A."/>
            <person name="Lee J.M."/>
            <person name="Lenz C.A."/>
            <person name="Li J.H."/>
            <person name="Li Y.-P."/>
            <person name="Lin X."/>
            <person name="Liu S.X."/>
            <person name="Liu Z.A."/>
            <person name="Luros J.S."/>
            <person name="Maiti R."/>
            <person name="Marziali A."/>
            <person name="Militscher J."/>
            <person name="Miranda M."/>
            <person name="Nguyen M."/>
            <person name="Nierman W.C."/>
            <person name="Osborne B.I."/>
            <person name="Pai G."/>
            <person name="Peterson J."/>
            <person name="Pham P.K."/>
            <person name="Rizzo M."/>
            <person name="Rooney T."/>
            <person name="Rowley D."/>
            <person name="Sakano H."/>
            <person name="Salzberg S.L."/>
            <person name="Schwartz J.R."/>
            <person name="Shinn P."/>
            <person name="Southwick A.M."/>
            <person name="Sun H."/>
            <person name="Tallon L.J."/>
            <person name="Tambunga G."/>
            <person name="Toriumi M.J."/>
            <person name="Town C.D."/>
            <person name="Utterback T."/>
            <person name="Van Aken S."/>
            <person name="Vaysberg M."/>
            <person name="Vysotskaia V.S."/>
            <person name="Walker M."/>
            <person name="Wu D."/>
            <person name="Yu G."/>
            <person name="Fraser C.M."/>
            <person name="Venter J.C."/>
            <person name="Davis R.W."/>
        </authorList>
    </citation>
    <scope>NUCLEOTIDE SEQUENCE [LARGE SCALE GENOMIC DNA]</scope>
    <source>
        <strain>cv. Columbia</strain>
    </source>
</reference>
<reference key="2">
    <citation type="journal article" date="2017" name="Plant J.">
        <title>Araport11: a complete reannotation of the Arabidopsis thaliana reference genome.</title>
        <authorList>
            <person name="Cheng C.Y."/>
            <person name="Krishnakumar V."/>
            <person name="Chan A.P."/>
            <person name="Thibaud-Nissen F."/>
            <person name="Schobel S."/>
            <person name="Town C.D."/>
        </authorList>
    </citation>
    <scope>GENOME REANNOTATION</scope>
    <source>
        <strain>cv. Columbia</strain>
    </source>
</reference>
<reference key="3">
    <citation type="journal article" date="2003" name="Science">
        <title>Empirical analysis of transcriptional activity in the Arabidopsis genome.</title>
        <authorList>
            <person name="Yamada K."/>
            <person name="Lim J."/>
            <person name="Dale J.M."/>
            <person name="Chen H."/>
            <person name="Shinn P."/>
            <person name="Palm C.J."/>
            <person name="Southwick A.M."/>
            <person name="Wu H.C."/>
            <person name="Kim C.J."/>
            <person name="Nguyen M."/>
            <person name="Pham P.K."/>
            <person name="Cheuk R.F."/>
            <person name="Karlin-Newmann G."/>
            <person name="Liu S.X."/>
            <person name="Lam B."/>
            <person name="Sakano H."/>
            <person name="Wu T."/>
            <person name="Yu G."/>
            <person name="Miranda M."/>
            <person name="Quach H.L."/>
            <person name="Tripp M."/>
            <person name="Chang C.H."/>
            <person name="Lee J.M."/>
            <person name="Toriumi M.J."/>
            <person name="Chan M.M."/>
            <person name="Tang C.C."/>
            <person name="Onodera C.S."/>
            <person name="Deng J.M."/>
            <person name="Akiyama K."/>
            <person name="Ansari Y."/>
            <person name="Arakawa T."/>
            <person name="Banh J."/>
            <person name="Banno F."/>
            <person name="Bowser L."/>
            <person name="Brooks S.Y."/>
            <person name="Carninci P."/>
            <person name="Chao Q."/>
            <person name="Choy N."/>
            <person name="Enju A."/>
            <person name="Goldsmith A.D."/>
            <person name="Gurjal M."/>
            <person name="Hansen N.F."/>
            <person name="Hayashizaki Y."/>
            <person name="Johnson-Hopson C."/>
            <person name="Hsuan V.W."/>
            <person name="Iida K."/>
            <person name="Karnes M."/>
            <person name="Khan S."/>
            <person name="Koesema E."/>
            <person name="Ishida J."/>
            <person name="Jiang P.X."/>
            <person name="Jones T."/>
            <person name="Kawai J."/>
            <person name="Kamiya A."/>
            <person name="Meyers C."/>
            <person name="Nakajima M."/>
            <person name="Narusaka M."/>
            <person name="Seki M."/>
            <person name="Sakurai T."/>
            <person name="Satou M."/>
            <person name="Tamse R."/>
            <person name="Vaysberg M."/>
            <person name="Wallender E.K."/>
            <person name="Wong C."/>
            <person name="Yamamura Y."/>
            <person name="Yuan S."/>
            <person name="Shinozaki K."/>
            <person name="Davis R.W."/>
            <person name="Theologis A."/>
            <person name="Ecker J.R."/>
        </authorList>
    </citation>
    <scope>NUCLEOTIDE SEQUENCE [LARGE SCALE MRNA] (ISOFORM 2)</scope>
    <source>
        <strain>cv. Columbia</strain>
    </source>
</reference>
<reference key="4">
    <citation type="journal article" date="2004" name="Genome Res.">
        <title>Whole genome sequence comparisons and 'full-length' cDNA sequences: a combined approach to evaluate and improve Arabidopsis genome annotation.</title>
        <authorList>
            <person name="Castelli V."/>
            <person name="Aury J.-M."/>
            <person name="Jaillon O."/>
            <person name="Wincker P."/>
            <person name="Clepet C."/>
            <person name="Menard M."/>
            <person name="Cruaud C."/>
            <person name="Quetier F."/>
            <person name="Scarpelli C."/>
            <person name="Schaechter V."/>
            <person name="Temple G."/>
            <person name="Caboche M."/>
            <person name="Weissenbach J."/>
            <person name="Salanoubat M."/>
        </authorList>
    </citation>
    <scope>NUCLEOTIDE SEQUENCE [LARGE SCALE MRNA] (ISOFORM 1)</scope>
    <source>
        <strain>cv. Columbia</strain>
    </source>
</reference>
<reference key="5">
    <citation type="journal article" date="2002" name="BMC Genomics">
        <title>Four signature motifs define the first class of structurally related large coiled-coil proteins in plants.</title>
        <authorList>
            <person name="Gindullis F."/>
            <person name="Rose A."/>
            <person name="Patel S."/>
            <person name="Meier I."/>
        </authorList>
    </citation>
    <scope>GENE FAMILY</scope>
    <scope>NOMENCLATURE</scope>
</reference>
<keyword id="KW-0025">Alternative splicing</keyword>
<keyword id="KW-0175">Coiled coil</keyword>
<keyword id="KW-1185">Reference proteome</keyword>
<sequence length="779" mass="87836">MEKRKRESSERSFGESESVSSLSEKDSEIQPESTMESRDDEIQSPTVSLEVETEKEELKDSMKTLAEKLSAALANVSAKDDLVKQHVKVAEEAVAGWEKAENEVVELKEKLEAADDKNRVLEDRVSHLDGALKECVRQLRQARDEQEQRIQDAVIERTQELQSSRTSLENQIFETATKSEELSQMAESVAKENVMLRHELLARCEELEIRTIERDLSTQAAETASKQQLDSIKKVAKLEAECRKFRMLAKSSASFNDHRSTDSHSDGGERMDVSCSDSWASSTLIEKRSLQGTSSSIELDLMGDFLEMERLVALPETPDGNGKSGPESVTEEVVVPSENSLASEIEVLTSRIKELEEKLEKLEAEKHELENEVKCNREEAVVHIENSEVLTSRTKELEEKLEKLEAEKEELKSEVKCNREKAVVHVENSLAAEIEVLTSRTKELEEQLEKLEAEKVELESEVKCNREEAVAQVENSLATEIEVLTCRIKQLEEKLEKLEVEKDELKSEVKCNREVESTLRFELEAIACEKMELENKLEKLEVEKAELQISFDIIKDKYEESQVCLQEIETKLGEIQTEMKLVNELKAEVESQTIAMEADAKTKSAKIESLEEDMRKERFAFDELRRKCEALEEEISLHKENSIKSENKEPKIKQEDIETAAGKLANCQKTIASLGKQLQSLATLEDFLTDTPIIPMAANGVSSSSNSESWKVHKNETFMTRNHPESIKPTKETSPSSSSSTASAAVSMPVSTNRGSSEKNRNGFATVFTRSKDGIHLAI</sequence>